<organism>
    <name type="scientific">Mus musculus</name>
    <name type="common">Mouse</name>
    <dbReference type="NCBI Taxonomy" id="10090"/>
    <lineage>
        <taxon>Eukaryota</taxon>
        <taxon>Metazoa</taxon>
        <taxon>Chordata</taxon>
        <taxon>Craniata</taxon>
        <taxon>Vertebrata</taxon>
        <taxon>Euteleostomi</taxon>
        <taxon>Mammalia</taxon>
        <taxon>Eutheria</taxon>
        <taxon>Euarchontoglires</taxon>
        <taxon>Glires</taxon>
        <taxon>Rodentia</taxon>
        <taxon>Myomorpha</taxon>
        <taxon>Muroidea</taxon>
        <taxon>Muridae</taxon>
        <taxon>Murinae</taxon>
        <taxon>Mus</taxon>
        <taxon>Mus</taxon>
    </lineage>
</organism>
<name>TEDC1_MOUSE</name>
<dbReference type="EMBL" id="AK146189">
    <property type="protein sequence ID" value="BAE26965.1"/>
    <property type="molecule type" value="mRNA"/>
</dbReference>
<dbReference type="EMBL" id="AK167092">
    <property type="protein sequence ID" value="BAE39248.1"/>
    <property type="molecule type" value="mRNA"/>
</dbReference>
<dbReference type="EMBL" id="AC161112">
    <property type="status" value="NOT_ANNOTATED_CDS"/>
    <property type="molecule type" value="Genomic_DNA"/>
</dbReference>
<dbReference type="CCDS" id="CCDS49196.1"/>
<dbReference type="RefSeq" id="NP_598802.2">
    <property type="nucleotide sequence ID" value="NM_134041.3"/>
</dbReference>
<dbReference type="SMR" id="Q3UK37"/>
<dbReference type="BioGRID" id="222690">
    <property type="interactions" value="1"/>
</dbReference>
<dbReference type="FunCoup" id="Q3UK37">
    <property type="interactions" value="147"/>
</dbReference>
<dbReference type="STRING" id="10090.ENSMUSP00000035351"/>
<dbReference type="GlyGen" id="Q3UK37">
    <property type="glycosylation" value="1 site"/>
</dbReference>
<dbReference type="iPTMnet" id="Q3UK37"/>
<dbReference type="PhosphoSitePlus" id="Q3UK37"/>
<dbReference type="PaxDb" id="10090-ENSMUSP00000035351"/>
<dbReference type="ProteomicsDB" id="263029"/>
<dbReference type="Antibodypedia" id="48308">
    <property type="antibodies" value="59 antibodies from 12 providers"/>
</dbReference>
<dbReference type="Ensembl" id="ENSMUST00000049271.13">
    <property type="protein sequence ID" value="ENSMUSP00000035351.9"/>
    <property type="gene ID" value="ENSMUSG00000037466.14"/>
</dbReference>
<dbReference type="GeneID" id="104732"/>
<dbReference type="KEGG" id="mmu:104732"/>
<dbReference type="UCSC" id="uc007pga.2">
    <property type="organism name" value="mouse"/>
</dbReference>
<dbReference type="AGR" id="MGI:2144738"/>
<dbReference type="CTD" id="283643"/>
<dbReference type="MGI" id="MGI:2144738">
    <property type="gene designation" value="Tedc1"/>
</dbReference>
<dbReference type="VEuPathDB" id="HostDB:ENSMUSG00000037466"/>
<dbReference type="eggNOG" id="ENOG502RXA4">
    <property type="taxonomic scope" value="Eukaryota"/>
</dbReference>
<dbReference type="GeneTree" id="ENSGT00390000011474"/>
<dbReference type="HOGENOM" id="CLU_052124_0_0_1"/>
<dbReference type="InParanoid" id="Q3UK37"/>
<dbReference type="OMA" id="FIPPMKT"/>
<dbReference type="OrthoDB" id="9906141at2759"/>
<dbReference type="TreeFam" id="TF330945"/>
<dbReference type="BioGRID-ORCS" id="104732">
    <property type="hits" value="10 hits in 79 CRISPR screens"/>
</dbReference>
<dbReference type="ChiTaRS" id="Tedc1">
    <property type="organism name" value="mouse"/>
</dbReference>
<dbReference type="PRO" id="PR:Q3UK37"/>
<dbReference type="Proteomes" id="UP000000589">
    <property type="component" value="Chromosome 12"/>
</dbReference>
<dbReference type="RNAct" id="Q3UK37">
    <property type="molecule type" value="protein"/>
</dbReference>
<dbReference type="Bgee" id="ENSMUSG00000037466">
    <property type="expression patterns" value="Expressed in humerus cartilage element and 140 other cell types or tissues"/>
</dbReference>
<dbReference type="ExpressionAtlas" id="Q3UK37">
    <property type="expression patterns" value="baseline and differential"/>
</dbReference>
<dbReference type="GO" id="GO:0005814">
    <property type="term" value="C:centriole"/>
    <property type="evidence" value="ECO:0000314"/>
    <property type="project" value="UniProtKB"/>
</dbReference>
<dbReference type="GO" id="GO:0005929">
    <property type="term" value="C:cilium"/>
    <property type="evidence" value="ECO:0000314"/>
    <property type="project" value="UniProtKB"/>
</dbReference>
<dbReference type="GO" id="GO:0005737">
    <property type="term" value="C:cytoplasm"/>
    <property type="evidence" value="ECO:0007669"/>
    <property type="project" value="UniProtKB-KW"/>
</dbReference>
<dbReference type="GO" id="GO:0045880">
    <property type="term" value="P:positive regulation of smoothened signaling pathway"/>
    <property type="evidence" value="ECO:0000315"/>
    <property type="project" value="UniProtKB"/>
</dbReference>
<dbReference type="InterPro" id="IPR043535">
    <property type="entry name" value="TEDC1"/>
</dbReference>
<dbReference type="InterPro" id="IPR027996">
    <property type="entry name" value="TEDC1_dom"/>
</dbReference>
<dbReference type="PANTHER" id="PTHR35076">
    <property type="entry name" value="TUBULIN EPSILON AND DELTA COMPLEX PROTEIN 1"/>
    <property type="match status" value="1"/>
</dbReference>
<dbReference type="PANTHER" id="PTHR35076:SF1">
    <property type="entry name" value="TUBULIN EPSILON AND DELTA COMPLEX PROTEIN 1"/>
    <property type="match status" value="1"/>
</dbReference>
<dbReference type="Pfam" id="PF14970">
    <property type="entry name" value="TEDC1"/>
    <property type="match status" value="1"/>
</dbReference>
<reference key="1">
    <citation type="journal article" date="2005" name="Science">
        <title>The transcriptional landscape of the mammalian genome.</title>
        <authorList>
            <person name="Carninci P."/>
            <person name="Kasukawa T."/>
            <person name="Katayama S."/>
            <person name="Gough J."/>
            <person name="Frith M.C."/>
            <person name="Maeda N."/>
            <person name="Oyama R."/>
            <person name="Ravasi T."/>
            <person name="Lenhard B."/>
            <person name="Wells C."/>
            <person name="Kodzius R."/>
            <person name="Shimokawa K."/>
            <person name="Bajic V.B."/>
            <person name="Brenner S.E."/>
            <person name="Batalov S."/>
            <person name="Forrest A.R."/>
            <person name="Zavolan M."/>
            <person name="Davis M.J."/>
            <person name="Wilming L.G."/>
            <person name="Aidinis V."/>
            <person name="Allen J.E."/>
            <person name="Ambesi-Impiombato A."/>
            <person name="Apweiler R."/>
            <person name="Aturaliya R.N."/>
            <person name="Bailey T.L."/>
            <person name="Bansal M."/>
            <person name="Baxter L."/>
            <person name="Beisel K.W."/>
            <person name="Bersano T."/>
            <person name="Bono H."/>
            <person name="Chalk A.M."/>
            <person name="Chiu K.P."/>
            <person name="Choudhary V."/>
            <person name="Christoffels A."/>
            <person name="Clutterbuck D.R."/>
            <person name="Crowe M.L."/>
            <person name="Dalla E."/>
            <person name="Dalrymple B.P."/>
            <person name="de Bono B."/>
            <person name="Della Gatta G."/>
            <person name="di Bernardo D."/>
            <person name="Down T."/>
            <person name="Engstrom P."/>
            <person name="Fagiolini M."/>
            <person name="Faulkner G."/>
            <person name="Fletcher C.F."/>
            <person name="Fukushima T."/>
            <person name="Furuno M."/>
            <person name="Futaki S."/>
            <person name="Gariboldi M."/>
            <person name="Georgii-Hemming P."/>
            <person name="Gingeras T.R."/>
            <person name="Gojobori T."/>
            <person name="Green R.E."/>
            <person name="Gustincich S."/>
            <person name="Harbers M."/>
            <person name="Hayashi Y."/>
            <person name="Hensch T.K."/>
            <person name="Hirokawa N."/>
            <person name="Hill D."/>
            <person name="Huminiecki L."/>
            <person name="Iacono M."/>
            <person name="Ikeo K."/>
            <person name="Iwama A."/>
            <person name="Ishikawa T."/>
            <person name="Jakt M."/>
            <person name="Kanapin A."/>
            <person name="Katoh M."/>
            <person name="Kawasawa Y."/>
            <person name="Kelso J."/>
            <person name="Kitamura H."/>
            <person name="Kitano H."/>
            <person name="Kollias G."/>
            <person name="Krishnan S.P."/>
            <person name="Kruger A."/>
            <person name="Kummerfeld S.K."/>
            <person name="Kurochkin I.V."/>
            <person name="Lareau L.F."/>
            <person name="Lazarevic D."/>
            <person name="Lipovich L."/>
            <person name="Liu J."/>
            <person name="Liuni S."/>
            <person name="McWilliam S."/>
            <person name="Madan Babu M."/>
            <person name="Madera M."/>
            <person name="Marchionni L."/>
            <person name="Matsuda H."/>
            <person name="Matsuzawa S."/>
            <person name="Miki H."/>
            <person name="Mignone F."/>
            <person name="Miyake S."/>
            <person name="Morris K."/>
            <person name="Mottagui-Tabar S."/>
            <person name="Mulder N."/>
            <person name="Nakano N."/>
            <person name="Nakauchi H."/>
            <person name="Ng P."/>
            <person name="Nilsson R."/>
            <person name="Nishiguchi S."/>
            <person name="Nishikawa S."/>
            <person name="Nori F."/>
            <person name="Ohara O."/>
            <person name="Okazaki Y."/>
            <person name="Orlando V."/>
            <person name="Pang K.C."/>
            <person name="Pavan W.J."/>
            <person name="Pavesi G."/>
            <person name="Pesole G."/>
            <person name="Petrovsky N."/>
            <person name="Piazza S."/>
            <person name="Reed J."/>
            <person name="Reid J.F."/>
            <person name="Ring B.Z."/>
            <person name="Ringwald M."/>
            <person name="Rost B."/>
            <person name="Ruan Y."/>
            <person name="Salzberg S.L."/>
            <person name="Sandelin A."/>
            <person name="Schneider C."/>
            <person name="Schoenbach C."/>
            <person name="Sekiguchi K."/>
            <person name="Semple C.A."/>
            <person name="Seno S."/>
            <person name="Sessa L."/>
            <person name="Sheng Y."/>
            <person name="Shibata Y."/>
            <person name="Shimada H."/>
            <person name="Shimada K."/>
            <person name="Silva D."/>
            <person name="Sinclair B."/>
            <person name="Sperling S."/>
            <person name="Stupka E."/>
            <person name="Sugiura K."/>
            <person name="Sultana R."/>
            <person name="Takenaka Y."/>
            <person name="Taki K."/>
            <person name="Tammoja K."/>
            <person name="Tan S.L."/>
            <person name="Tang S."/>
            <person name="Taylor M.S."/>
            <person name="Tegner J."/>
            <person name="Teichmann S.A."/>
            <person name="Ueda H.R."/>
            <person name="van Nimwegen E."/>
            <person name="Verardo R."/>
            <person name="Wei C.L."/>
            <person name="Yagi K."/>
            <person name="Yamanishi H."/>
            <person name="Zabarovsky E."/>
            <person name="Zhu S."/>
            <person name="Zimmer A."/>
            <person name="Hide W."/>
            <person name="Bult C."/>
            <person name="Grimmond S.M."/>
            <person name="Teasdale R.D."/>
            <person name="Liu E.T."/>
            <person name="Brusic V."/>
            <person name="Quackenbush J."/>
            <person name="Wahlestedt C."/>
            <person name="Mattick J.S."/>
            <person name="Hume D.A."/>
            <person name="Kai C."/>
            <person name="Sasaki D."/>
            <person name="Tomaru Y."/>
            <person name="Fukuda S."/>
            <person name="Kanamori-Katayama M."/>
            <person name="Suzuki M."/>
            <person name="Aoki J."/>
            <person name="Arakawa T."/>
            <person name="Iida J."/>
            <person name="Imamura K."/>
            <person name="Itoh M."/>
            <person name="Kato T."/>
            <person name="Kawaji H."/>
            <person name="Kawagashira N."/>
            <person name="Kawashima T."/>
            <person name="Kojima M."/>
            <person name="Kondo S."/>
            <person name="Konno H."/>
            <person name="Nakano K."/>
            <person name="Ninomiya N."/>
            <person name="Nishio T."/>
            <person name="Okada M."/>
            <person name="Plessy C."/>
            <person name="Shibata K."/>
            <person name="Shiraki T."/>
            <person name="Suzuki S."/>
            <person name="Tagami M."/>
            <person name="Waki K."/>
            <person name="Watahiki A."/>
            <person name="Okamura-Oho Y."/>
            <person name="Suzuki H."/>
            <person name="Kawai J."/>
            <person name="Hayashizaki Y."/>
        </authorList>
    </citation>
    <scope>NUCLEOTIDE SEQUENCE [LARGE SCALE MRNA]</scope>
    <source>
        <strain>C57BL/6J</strain>
        <strain>DBA/2J</strain>
    </source>
</reference>
<reference key="2">
    <citation type="journal article" date="2009" name="PLoS Biol.">
        <title>Lineage-specific biology revealed by a finished genome assembly of the mouse.</title>
        <authorList>
            <person name="Church D.M."/>
            <person name="Goodstadt L."/>
            <person name="Hillier L.W."/>
            <person name="Zody M.C."/>
            <person name="Goldstein S."/>
            <person name="She X."/>
            <person name="Bult C.J."/>
            <person name="Agarwala R."/>
            <person name="Cherry J.L."/>
            <person name="DiCuccio M."/>
            <person name="Hlavina W."/>
            <person name="Kapustin Y."/>
            <person name="Meric P."/>
            <person name="Maglott D."/>
            <person name="Birtle Z."/>
            <person name="Marques A.C."/>
            <person name="Graves T."/>
            <person name="Zhou S."/>
            <person name="Teague B."/>
            <person name="Potamousis K."/>
            <person name="Churas C."/>
            <person name="Place M."/>
            <person name="Herschleb J."/>
            <person name="Runnheim R."/>
            <person name="Forrest D."/>
            <person name="Amos-Landgraf J."/>
            <person name="Schwartz D.C."/>
            <person name="Cheng Z."/>
            <person name="Lindblad-Toh K."/>
            <person name="Eichler E.E."/>
            <person name="Ponting C.P."/>
        </authorList>
    </citation>
    <scope>NUCLEOTIDE SEQUENCE [LARGE SCALE GENOMIC DNA]</scope>
    <source>
        <strain>C57BL/6J</strain>
    </source>
</reference>
<reference key="3">
    <citation type="journal article" date="2018" name="Nat. Genet.">
        <title>A CRISPR-based screen for Hedgehog signaling provides insights into ciliary function and ciliopathies.</title>
        <authorList>
            <person name="Breslow D.K."/>
            <person name="Hoogendoorn S."/>
            <person name="Kopp A.R."/>
            <person name="Morgens D.W."/>
            <person name="Vu B.K."/>
            <person name="Kennedy M.C."/>
            <person name="Han K."/>
            <person name="Li A."/>
            <person name="Hess G.T."/>
            <person name="Bassik M.C."/>
            <person name="Chen J.K."/>
            <person name="Nachury M.V."/>
        </authorList>
    </citation>
    <scope>SUBCELLULAR LOCATION</scope>
    <scope>FUNCTION</scope>
    <scope>INTERACTION WITH TEDC2</scope>
    <scope>SUBUNIT</scope>
    <scope>IDENTIFICATION BY MASS SPECTROMETRY</scope>
</reference>
<keyword id="KW-0966">Cell projection</keyword>
<keyword id="KW-0175">Coiled coil</keyword>
<keyword id="KW-0963">Cytoplasm</keyword>
<keyword id="KW-0206">Cytoskeleton</keyword>
<keyword id="KW-1185">Reference proteome</keyword>
<evidence type="ECO:0000250" key="1">
    <source>
        <dbReference type="UniProtKB" id="Q86SX3"/>
    </source>
</evidence>
<evidence type="ECO:0000255" key="2"/>
<evidence type="ECO:0000256" key="3">
    <source>
        <dbReference type="SAM" id="MobiDB-lite"/>
    </source>
</evidence>
<evidence type="ECO:0000269" key="4">
    <source>
    </source>
</evidence>
<evidence type="ECO:0000303" key="5">
    <source>
    </source>
</evidence>
<evidence type="ECO:0000305" key="6"/>
<evidence type="ECO:0000312" key="7">
    <source>
        <dbReference type="MGI" id="MGI:2144738"/>
    </source>
</evidence>
<gene>
    <name evidence="7" type="primary">Tedc1</name>
</gene>
<comment type="function">
    <text evidence="1 4">Acts as a positive regulator of ciliary hedgehog signaling. Required for centriole stability (PubMed:29459677). May play a role in counteracting perturbation of actin filaments, such as after treatment with the actin depolymerizing microbial metabolite Chivosazole F (By similarity).</text>
</comment>
<comment type="subunit">
    <text evidence="4">Interacts with TEDC2 (PubMed:29459677). Found in a complex with TEDC1, TEDC2, TUBE1 and TUBD1 (PubMed:29459677).</text>
</comment>
<comment type="subcellular location">
    <subcellularLocation>
        <location evidence="4">Cell projection</location>
        <location evidence="4">Cilium</location>
    </subcellularLocation>
    <subcellularLocation>
        <location evidence="4">Cytoplasm</location>
        <location evidence="4">Cytoskeleton</location>
        <location evidence="4">Microtubule organizing center</location>
        <location evidence="4">Centrosome</location>
        <location evidence="4">Centriole</location>
    </subcellularLocation>
</comment>
<sequence>MRRRRSRVEGAARALPEAVAALSRCLPAGPSPEIFRRAKFDRPEAAPVLWQLLLRVLSPLAANNTWTDLAPEAQACVVKSALGSQGYPRSVLLQFPDGSSQGSRELLLALSWLLARGPLLEQLLAQTRVQLGDQLPQWEAPTSPGPPAPFVEPKSPVDLRLVEWLMGRLRFRWRCLISSQQEQCILLSKIHLYTQGCHSQQSLGHLSVAETEMLRDPESGQQLLQALESENIRLEAALEWRRRELVFWQWMDTVLDTCSPETPAVTSQPTFLPEISEGGLGELESVKQELQALQEELREVSEPRRAAWEARVGGLGQGPEWSNSRKALQEAVQQELAALQGSWEQSSTPGQPQRPHRLVRSKDGAPRPQGLQAAEVIRTLSAKEACLKKALHQLQRQCQQELARLAGALPGLIWILPPEH</sequence>
<proteinExistence type="evidence at protein level"/>
<protein>
    <recommendedName>
        <fullName evidence="5">Tubulin epsilon and delta complex protein 1</fullName>
    </recommendedName>
    <alternativeName>
        <fullName>Uncharacterized protein C14orf80 homolog</fullName>
    </alternativeName>
</protein>
<feature type="chain" id="PRO_0000330693" description="Tubulin epsilon and delta complex protein 1">
    <location>
        <begin position="1"/>
        <end position="420"/>
    </location>
</feature>
<feature type="region of interest" description="Disordered" evidence="3">
    <location>
        <begin position="342"/>
        <end position="369"/>
    </location>
</feature>
<feature type="coiled-coil region" evidence="2">
    <location>
        <begin position="276"/>
        <end position="340"/>
    </location>
</feature>
<feature type="coiled-coil region" evidence="2">
    <location>
        <begin position="377"/>
        <end position="409"/>
    </location>
</feature>
<feature type="compositionally biased region" description="Polar residues" evidence="3">
    <location>
        <begin position="342"/>
        <end position="351"/>
    </location>
</feature>
<feature type="sequence conflict" description="In Ref. 1; BAE26965." evidence="6" ref="1">
    <original>I</original>
    <variation>V</variation>
    <location>
        <position position="34"/>
    </location>
</feature>
<feature type="sequence conflict" description="In Ref. 1; BAE26965." evidence="6" ref="1">
    <original>P</original>
    <variation>L</variation>
    <location>
        <position position="146"/>
    </location>
</feature>
<feature type="sequence conflict" description="In Ref. 1; BAE26965." evidence="6" ref="1">
    <original>E</original>
    <variation>K</variation>
    <location>
        <position position="152"/>
    </location>
</feature>
<feature type="sequence conflict" description="In Ref. 1; BAE26965." evidence="6" ref="1">
    <original>Q</original>
    <variation>R</variation>
    <location>
        <position position="201"/>
    </location>
</feature>
<feature type="sequence conflict" description="In Ref. 1; BAE26965." evidence="6" ref="1">
    <original>S</original>
    <variation>G</variation>
    <location>
        <position position="229"/>
    </location>
</feature>
<feature type="sequence conflict" description="In Ref. 1; BAE26965." evidence="6" ref="1">
    <original>P</original>
    <variation>H</variation>
    <location>
        <position position="260"/>
    </location>
</feature>
<feature type="sequence conflict" description="In Ref. 1; BAE26965." evidence="6" ref="1">
    <original>F</original>
    <variation>V</variation>
    <location>
        <position position="271"/>
    </location>
</feature>
<feature type="sequence conflict" description="In Ref. 1; BAE26965." evidence="6" ref="1">
    <original>E</original>
    <variation>A</variation>
    <location>
        <position position="274"/>
    </location>
</feature>
<accession>Q3UK37</accession>
<accession>E9Q930</accession>
<accession>Q3TK97</accession>